<comment type="function">
    <text evidence="1">Catalyzes the N-acylation of UDP-3-O-acylglucosamine using 3-hydroxyacyl-ACP as the acyl donor. Is involved in the biosynthesis of lipid A, a phosphorylated glycolipid that anchors the lipopolysaccharide to the outer membrane of the cell.</text>
</comment>
<comment type="catalytic activity">
    <reaction evidence="1">
        <text>a UDP-3-O-[(3R)-3-hydroxyacyl]-alpha-D-glucosamine + a (3R)-hydroxyacyl-[ACP] = a UDP-2-N,3-O-bis[(3R)-3-hydroxyacyl]-alpha-D-glucosamine + holo-[ACP] + H(+)</text>
        <dbReference type="Rhea" id="RHEA:53836"/>
        <dbReference type="Rhea" id="RHEA-COMP:9685"/>
        <dbReference type="Rhea" id="RHEA-COMP:9945"/>
        <dbReference type="ChEBI" id="CHEBI:15378"/>
        <dbReference type="ChEBI" id="CHEBI:64479"/>
        <dbReference type="ChEBI" id="CHEBI:78827"/>
        <dbReference type="ChEBI" id="CHEBI:137740"/>
        <dbReference type="ChEBI" id="CHEBI:137748"/>
        <dbReference type="EC" id="2.3.1.191"/>
    </reaction>
</comment>
<comment type="pathway">
    <text evidence="1">Bacterial outer membrane biogenesis; LPS lipid A biosynthesis.</text>
</comment>
<comment type="subunit">
    <text evidence="1">Homotrimer.</text>
</comment>
<comment type="similarity">
    <text evidence="1">Belongs to the transferase hexapeptide repeat family. LpxD subfamily.</text>
</comment>
<comment type="sequence caution" evidence="2">
    <conflict type="erroneous initiation">
        <sequence resource="EMBL-CDS" id="AAF83855"/>
    </conflict>
</comment>
<keyword id="KW-0012">Acyltransferase</keyword>
<keyword id="KW-0441">Lipid A biosynthesis</keyword>
<keyword id="KW-0444">Lipid biosynthesis</keyword>
<keyword id="KW-0443">Lipid metabolism</keyword>
<keyword id="KW-0677">Repeat</keyword>
<keyword id="KW-0808">Transferase</keyword>
<feature type="chain" id="PRO_0000059714" description="UDP-3-O-acylglucosamine N-acyltransferase">
    <location>
        <begin position="1"/>
        <end position="338"/>
    </location>
</feature>
<feature type="active site" description="Proton acceptor" evidence="1">
    <location>
        <position position="239"/>
    </location>
</feature>
<name>LPXD_XYLFA</name>
<reference key="1">
    <citation type="journal article" date="2000" name="Nature">
        <title>The genome sequence of the plant pathogen Xylella fastidiosa.</title>
        <authorList>
            <person name="Simpson A.J.G."/>
            <person name="Reinach F.C."/>
            <person name="Arruda P."/>
            <person name="Abreu F.A."/>
            <person name="Acencio M."/>
            <person name="Alvarenga R."/>
            <person name="Alves L.M.C."/>
            <person name="Araya J.E."/>
            <person name="Baia G.S."/>
            <person name="Baptista C.S."/>
            <person name="Barros M.H."/>
            <person name="Bonaccorsi E.D."/>
            <person name="Bordin S."/>
            <person name="Bove J.M."/>
            <person name="Briones M.R.S."/>
            <person name="Bueno M.R.P."/>
            <person name="Camargo A.A."/>
            <person name="Camargo L.E.A."/>
            <person name="Carraro D.M."/>
            <person name="Carrer H."/>
            <person name="Colauto N.B."/>
            <person name="Colombo C."/>
            <person name="Costa F.F."/>
            <person name="Costa M.C.R."/>
            <person name="Costa-Neto C.M."/>
            <person name="Coutinho L.L."/>
            <person name="Cristofani M."/>
            <person name="Dias-Neto E."/>
            <person name="Docena C."/>
            <person name="El-Dorry H."/>
            <person name="Facincani A.P."/>
            <person name="Ferreira A.J.S."/>
            <person name="Ferreira V.C.A."/>
            <person name="Ferro J.A."/>
            <person name="Fraga J.S."/>
            <person name="Franca S.C."/>
            <person name="Franco M.C."/>
            <person name="Frohme M."/>
            <person name="Furlan L.R."/>
            <person name="Garnier M."/>
            <person name="Goldman G.H."/>
            <person name="Goldman M.H.S."/>
            <person name="Gomes S.L."/>
            <person name="Gruber A."/>
            <person name="Ho P.L."/>
            <person name="Hoheisel J.D."/>
            <person name="Junqueira M.L."/>
            <person name="Kemper E.L."/>
            <person name="Kitajima J.P."/>
            <person name="Krieger J.E."/>
            <person name="Kuramae E.E."/>
            <person name="Laigret F."/>
            <person name="Lambais M.R."/>
            <person name="Leite L.C.C."/>
            <person name="Lemos E.G.M."/>
            <person name="Lemos M.V.F."/>
            <person name="Lopes S.A."/>
            <person name="Lopes C.R."/>
            <person name="Machado J.A."/>
            <person name="Machado M.A."/>
            <person name="Madeira A.M.B.N."/>
            <person name="Madeira H.M.F."/>
            <person name="Marino C.L."/>
            <person name="Marques M.V."/>
            <person name="Martins E.A.L."/>
            <person name="Martins E.M.F."/>
            <person name="Matsukuma A.Y."/>
            <person name="Menck C.F.M."/>
            <person name="Miracca E.C."/>
            <person name="Miyaki C.Y."/>
            <person name="Monteiro-Vitorello C.B."/>
            <person name="Moon D.H."/>
            <person name="Nagai M.A."/>
            <person name="Nascimento A.L.T.O."/>
            <person name="Netto L.E.S."/>
            <person name="Nhani A. Jr."/>
            <person name="Nobrega F.G."/>
            <person name="Nunes L.R."/>
            <person name="Oliveira M.A."/>
            <person name="de Oliveira M.C."/>
            <person name="de Oliveira R.C."/>
            <person name="Palmieri D.A."/>
            <person name="Paris A."/>
            <person name="Peixoto B.R."/>
            <person name="Pereira G.A.G."/>
            <person name="Pereira H.A. Jr."/>
            <person name="Pesquero J.B."/>
            <person name="Quaggio R.B."/>
            <person name="Roberto P.G."/>
            <person name="Rodrigues V."/>
            <person name="de Rosa A.J.M."/>
            <person name="de Rosa V.E. Jr."/>
            <person name="de Sa R.G."/>
            <person name="Santelli R.V."/>
            <person name="Sawasaki H.E."/>
            <person name="da Silva A.C.R."/>
            <person name="da Silva A.M."/>
            <person name="da Silva F.R."/>
            <person name="Silva W.A. Jr."/>
            <person name="da Silveira J.F."/>
            <person name="Silvestri M.L.Z."/>
            <person name="Siqueira W.J."/>
            <person name="de Souza A.A."/>
            <person name="de Souza A.P."/>
            <person name="Terenzi M.F."/>
            <person name="Truffi D."/>
            <person name="Tsai S.M."/>
            <person name="Tsuhako M.H."/>
            <person name="Vallada H."/>
            <person name="Van Sluys M.A."/>
            <person name="Verjovski-Almeida S."/>
            <person name="Vettore A.L."/>
            <person name="Zago M.A."/>
            <person name="Zatz M."/>
            <person name="Meidanis J."/>
            <person name="Setubal J.C."/>
        </authorList>
    </citation>
    <scope>NUCLEOTIDE SEQUENCE [LARGE SCALE GENOMIC DNA]</scope>
    <source>
        <strain>9a5c</strain>
    </source>
</reference>
<evidence type="ECO:0000255" key="1">
    <source>
        <dbReference type="HAMAP-Rule" id="MF_00523"/>
    </source>
</evidence>
<evidence type="ECO:0000305" key="2"/>
<sequence>MPIFTAQELAERFNLQLFGDGNLRIHGVATLTQASPEQLSFLANPRYLTQLLNSRAGVIVLHADDVKTASGTVLIAKDPYVTFAKIAALFDIKPAREAGIHPLATVDPSAHVSPTAHVGAFVSIGARSSIGASCIIGTGSIIGDDCTIDDGSELIARVTLISKVRLGKRVRIHPGAVLGGEGFGLAMENGHWIKIPQLGGVVIGDDCEIGANSCIDRGALDDTVLEEDVHIDNLVQIAHNCRIGAHTAIAGCTGIAGSAKIGRYCLLGGHVGVVGHLQICDNVVITGKSVVRNSIHTPGEYSSGTPLTDNRTWRKNAVRFKQLDMLVRRMMAVSKEKA</sequence>
<gene>
    <name evidence="1" type="primary">lpxD</name>
    <name type="ordered locus">XF_1045</name>
</gene>
<accession>Q9PEI3</accession>
<protein>
    <recommendedName>
        <fullName evidence="1">UDP-3-O-acylglucosamine N-acyltransferase</fullName>
        <ecNumber evidence="1">2.3.1.191</ecNumber>
    </recommendedName>
</protein>
<proteinExistence type="inferred from homology"/>
<organism>
    <name type="scientific">Xylella fastidiosa (strain 9a5c)</name>
    <dbReference type="NCBI Taxonomy" id="160492"/>
    <lineage>
        <taxon>Bacteria</taxon>
        <taxon>Pseudomonadati</taxon>
        <taxon>Pseudomonadota</taxon>
        <taxon>Gammaproteobacteria</taxon>
        <taxon>Lysobacterales</taxon>
        <taxon>Lysobacteraceae</taxon>
        <taxon>Xylella</taxon>
    </lineage>
</organism>
<dbReference type="EC" id="2.3.1.191" evidence="1"/>
<dbReference type="EMBL" id="AE003849">
    <property type="protein sequence ID" value="AAF83855.1"/>
    <property type="status" value="ALT_INIT"/>
    <property type="molecule type" value="Genomic_DNA"/>
</dbReference>
<dbReference type="PIR" id="D82731">
    <property type="entry name" value="D82731"/>
</dbReference>
<dbReference type="RefSeq" id="WP_031336942.1">
    <property type="nucleotide sequence ID" value="NC_002488.3"/>
</dbReference>
<dbReference type="SMR" id="Q9PEI3"/>
<dbReference type="STRING" id="160492.XF_1045"/>
<dbReference type="KEGG" id="xfa:XF_1045"/>
<dbReference type="eggNOG" id="COG1044">
    <property type="taxonomic scope" value="Bacteria"/>
</dbReference>
<dbReference type="HOGENOM" id="CLU_049865_0_1_6"/>
<dbReference type="UniPathway" id="UPA00973"/>
<dbReference type="Proteomes" id="UP000000812">
    <property type="component" value="Chromosome"/>
</dbReference>
<dbReference type="GO" id="GO:0016020">
    <property type="term" value="C:membrane"/>
    <property type="evidence" value="ECO:0007669"/>
    <property type="project" value="GOC"/>
</dbReference>
<dbReference type="GO" id="GO:0016410">
    <property type="term" value="F:N-acyltransferase activity"/>
    <property type="evidence" value="ECO:0007669"/>
    <property type="project" value="InterPro"/>
</dbReference>
<dbReference type="GO" id="GO:0009245">
    <property type="term" value="P:lipid A biosynthetic process"/>
    <property type="evidence" value="ECO:0007669"/>
    <property type="project" value="UniProtKB-UniRule"/>
</dbReference>
<dbReference type="CDD" id="cd03352">
    <property type="entry name" value="LbH_LpxD"/>
    <property type="match status" value="1"/>
</dbReference>
<dbReference type="Gene3D" id="1.20.5.170">
    <property type="match status" value="1"/>
</dbReference>
<dbReference type="Gene3D" id="2.160.10.10">
    <property type="entry name" value="Hexapeptide repeat proteins"/>
    <property type="match status" value="1"/>
</dbReference>
<dbReference type="Gene3D" id="3.40.1390.10">
    <property type="entry name" value="MurE/MurF, N-terminal domain"/>
    <property type="match status" value="1"/>
</dbReference>
<dbReference type="HAMAP" id="MF_00523">
    <property type="entry name" value="LpxD"/>
    <property type="match status" value="1"/>
</dbReference>
<dbReference type="InterPro" id="IPR001451">
    <property type="entry name" value="Hexapep"/>
</dbReference>
<dbReference type="InterPro" id="IPR007691">
    <property type="entry name" value="LpxD"/>
</dbReference>
<dbReference type="InterPro" id="IPR011004">
    <property type="entry name" value="Trimer_LpxA-like_sf"/>
</dbReference>
<dbReference type="InterPro" id="IPR020573">
    <property type="entry name" value="UDP_GlcNAc_AcTrfase_non-rep"/>
</dbReference>
<dbReference type="NCBIfam" id="TIGR01853">
    <property type="entry name" value="lipid_A_lpxD"/>
    <property type="match status" value="1"/>
</dbReference>
<dbReference type="NCBIfam" id="NF002060">
    <property type="entry name" value="PRK00892.1"/>
    <property type="match status" value="1"/>
</dbReference>
<dbReference type="PANTHER" id="PTHR43378">
    <property type="entry name" value="UDP-3-O-ACYLGLUCOSAMINE N-ACYLTRANSFERASE"/>
    <property type="match status" value="1"/>
</dbReference>
<dbReference type="PANTHER" id="PTHR43378:SF2">
    <property type="entry name" value="UDP-3-O-ACYLGLUCOSAMINE N-ACYLTRANSFERASE 1, MITOCHONDRIAL-RELATED"/>
    <property type="match status" value="1"/>
</dbReference>
<dbReference type="Pfam" id="PF00132">
    <property type="entry name" value="Hexapep"/>
    <property type="match status" value="1"/>
</dbReference>
<dbReference type="Pfam" id="PF14602">
    <property type="entry name" value="Hexapep_2"/>
    <property type="match status" value="2"/>
</dbReference>
<dbReference type="Pfam" id="PF04613">
    <property type="entry name" value="LpxD"/>
    <property type="match status" value="1"/>
</dbReference>
<dbReference type="SUPFAM" id="SSF51161">
    <property type="entry name" value="Trimeric LpxA-like enzymes"/>
    <property type="match status" value="1"/>
</dbReference>